<keyword id="KW-0106">Calcium</keyword>
<keyword id="KW-0109">Calcium transport</keyword>
<keyword id="KW-0406">Ion transport</keyword>
<keyword id="KW-0472">Membrane</keyword>
<keyword id="KW-0597">Phosphoprotein</keyword>
<keyword id="KW-0630">Potassium</keyword>
<keyword id="KW-0633">Potassium transport</keyword>
<keyword id="KW-1185">Reference proteome</keyword>
<keyword id="KW-0812">Transmembrane</keyword>
<keyword id="KW-1133">Transmembrane helix</keyword>
<keyword id="KW-0813">Transport</keyword>
<keyword id="KW-0926">Vacuole</keyword>
<organism>
    <name type="scientific">Saccharomyces cerevisiae (strain ATCC 204508 / S288c)</name>
    <name type="common">Baker's yeast</name>
    <dbReference type="NCBI Taxonomy" id="559292"/>
    <lineage>
        <taxon>Eukaryota</taxon>
        <taxon>Fungi</taxon>
        <taxon>Dikarya</taxon>
        <taxon>Ascomycota</taxon>
        <taxon>Saccharomycotina</taxon>
        <taxon>Saccharomycetes</taxon>
        <taxon>Saccharomycetales</taxon>
        <taxon>Saccharomycetaceae</taxon>
        <taxon>Saccharomyces</taxon>
    </lineage>
</organism>
<sequence>MVSRFYQIPGTHRPSSAISSSNESSSLLSARRISQTYFNYQATPECQKVSSKYDPDNPNKDKLGTYDGVFVPTALNVLSILMFLRFGFILGQLGIICTIGLLLLSYTINLLTTLSISAISTNGTVRGGGAYYMISRSLGPEFGGSIGLVFFLGQVFNAGMNAVGIIEPLLYNLGYSAQGEPPAALGELLPRGHWHEFTYATVILFLCFSVAFVGSQTVSRAGNILFLVLAASIFSIPLSALIRSPFTEGGISYTGPSWQTFHDNLLPHLTKGAAGSLLKGKETFNDLFGVFFPATAGIFAGAGMSSELRKPSKSIPKGTLWGLLFTFICYAVVVFSMGCSIPRRSLYDEVQIIQTISSVQWVIFMGEMATSLFSIIVGMLGAAYVLEAIAKDNIIPGLEIFAHSPLYSLIFTWILTQLCLFSDVNKIATFITMTFLMTFVVMNLACFLLGISSAPNFRPSFKYFNRYTTAIGALLSVVAMLIVDGISASVLFLAMILLFLFIHYFSPPKSWGDVSQSLIYHQVRKYLLRLRQDNIKYWRPQILLFVDNPRTSWNLIRFCNHLKKGGLYILGHVAVTADFPKQLNELKTQQKAWMKIRDMAAIKAFVQVGTGPSLIWGIRNVFIGSGLGGMKPNITVVGFFDLESYRKHIPQSRSQNNLQKQVEIKATVPRSTCSDVKINVPLPTDECKNETKVNVQQWVQIVEDLSLMQSNIAIAHGFKNLEIPNKRDSCFPKKTIDLYPIQMCGKVEAKGDQPAAITTNFDTYTLILQLAAILVTVPEWKRTHSLRVILFVEQEYHRTNETQRMKKLLQVLRIDAEVLVVSLDQFRVYNTIVKGDPIVFDYVNSKLADNEWWKDLVEARDTLKPKRRFSTIEPQTIAKQFTQSRKYTSGVQKLGVSFTMNTRMPTNRIDTPCESEDSDLDTDLTSIRDAFSASTNISVGKDLTTKSKTGSDRTNLLVKNLQSDVSTQSLRPVFSSNTLPRTRVVEDGTGEQPTLIPIAEPDLSNGNGTGSGIGNGNKLKKPVLPELSPCCSKDSLVTAMQNLGFNDLPSTAQHLVLNDVMTQMSKSSDLIFSTLPVPALGTHEDHDASLQYVEDLDIWLEGLPPCMLINSQTMTVTTAL</sequence>
<protein>
    <recommendedName>
        <fullName evidence="8">Vacuolar cation-chloride cotransporter 1</fullName>
    </recommendedName>
    <alternativeName>
        <fullName evidence="5">Vacuolar homolog of CCC family protein 1</fullName>
    </alternativeName>
</protein>
<proteinExistence type="evidence at protein level"/>
<accession>P38329</accession>
<accession>D6VQN1</accession>
<gene>
    <name evidence="5" type="primary">VHC1</name>
    <name evidence="9" type="ordered locus">YBR235W</name>
    <name type="ORF">YBR1601</name>
</gene>
<name>VHC1_YEAST</name>
<evidence type="ECO:0000255" key="1"/>
<evidence type="ECO:0000256" key="2">
    <source>
        <dbReference type="SAM" id="MobiDB-lite"/>
    </source>
</evidence>
<evidence type="ECO:0000269" key="3">
    <source>
    </source>
</evidence>
<evidence type="ECO:0000269" key="4">
    <source>
    </source>
</evidence>
<evidence type="ECO:0000303" key="5">
    <source>
    </source>
</evidence>
<evidence type="ECO:0000305" key="6"/>
<evidence type="ECO:0000305" key="7">
    <source>
    </source>
</evidence>
<evidence type="ECO:0000305" key="8">
    <source>
    </source>
</evidence>
<evidence type="ECO:0000312" key="9">
    <source>
        <dbReference type="SGD" id="S000000439"/>
    </source>
</evidence>
<evidence type="ECO:0007744" key="10">
    <source>
    </source>
</evidence>
<evidence type="ECO:0007744" key="11">
    <source>
    </source>
</evidence>
<reference key="1">
    <citation type="journal article" date="1994" name="EMBO J.">
        <title>Complete DNA sequence of yeast chromosome II.</title>
        <authorList>
            <person name="Feldmann H."/>
            <person name="Aigle M."/>
            <person name="Aljinovic G."/>
            <person name="Andre B."/>
            <person name="Baclet M.C."/>
            <person name="Barthe C."/>
            <person name="Baur A."/>
            <person name="Becam A.-M."/>
            <person name="Biteau N."/>
            <person name="Boles E."/>
            <person name="Brandt T."/>
            <person name="Brendel M."/>
            <person name="Brueckner M."/>
            <person name="Bussereau F."/>
            <person name="Christiansen C."/>
            <person name="Contreras R."/>
            <person name="Crouzet M."/>
            <person name="Cziepluch C."/>
            <person name="Demolis N."/>
            <person name="Delaveau T."/>
            <person name="Doignon F."/>
            <person name="Domdey H."/>
            <person name="Duesterhus S."/>
            <person name="Dubois E."/>
            <person name="Dujon B."/>
            <person name="El Bakkoury M."/>
            <person name="Entian K.-D."/>
            <person name="Feuermann M."/>
            <person name="Fiers W."/>
            <person name="Fobo G.M."/>
            <person name="Fritz C."/>
            <person name="Gassenhuber J."/>
            <person name="Glansdorff N."/>
            <person name="Goffeau A."/>
            <person name="Grivell L.A."/>
            <person name="de Haan M."/>
            <person name="Hein C."/>
            <person name="Herbert C.J."/>
            <person name="Hollenberg C.P."/>
            <person name="Holmstroem K."/>
            <person name="Jacq C."/>
            <person name="Jacquet M."/>
            <person name="Jauniaux J.-C."/>
            <person name="Jonniaux J.-L."/>
            <person name="Kallesoee T."/>
            <person name="Kiesau P."/>
            <person name="Kirchrath L."/>
            <person name="Koetter P."/>
            <person name="Korol S."/>
            <person name="Liebl S."/>
            <person name="Logghe M."/>
            <person name="Lohan A.J.E."/>
            <person name="Louis E.J."/>
            <person name="Li Z.Y."/>
            <person name="Maat M.J."/>
            <person name="Mallet L."/>
            <person name="Mannhaupt G."/>
            <person name="Messenguy F."/>
            <person name="Miosga T."/>
            <person name="Molemans F."/>
            <person name="Mueller S."/>
            <person name="Nasr F."/>
            <person name="Obermaier B."/>
            <person name="Perea J."/>
            <person name="Pierard A."/>
            <person name="Piravandi E."/>
            <person name="Pohl F.M."/>
            <person name="Pohl T.M."/>
            <person name="Potier S."/>
            <person name="Proft M."/>
            <person name="Purnelle B."/>
            <person name="Ramezani Rad M."/>
            <person name="Rieger M."/>
            <person name="Rose M."/>
            <person name="Schaaff-Gerstenschlaeger I."/>
            <person name="Scherens B."/>
            <person name="Schwarzlose C."/>
            <person name="Skala J."/>
            <person name="Slonimski P.P."/>
            <person name="Smits P.H.M."/>
            <person name="Souciet J.-L."/>
            <person name="Steensma H.Y."/>
            <person name="Stucka R."/>
            <person name="Urrestarazu L.A."/>
            <person name="van der Aart Q.J.M."/>
            <person name="Van Dyck L."/>
            <person name="Vassarotti A."/>
            <person name="Vetter I."/>
            <person name="Vierendeels F."/>
            <person name="Vissers S."/>
            <person name="Wagner G."/>
            <person name="de Wergifosse P."/>
            <person name="Wolfe K.H."/>
            <person name="Zagulski M."/>
            <person name="Zimmermann F.K."/>
            <person name="Mewes H.-W."/>
            <person name="Kleine K."/>
        </authorList>
    </citation>
    <scope>NUCLEOTIDE SEQUENCE [LARGE SCALE GENOMIC DNA]</scope>
    <source>
        <strain>ATCC 204508 / S288c</strain>
    </source>
</reference>
<reference key="2">
    <citation type="journal article" date="2014" name="G3 (Bethesda)">
        <title>The reference genome sequence of Saccharomyces cerevisiae: Then and now.</title>
        <authorList>
            <person name="Engel S.R."/>
            <person name="Dietrich F.S."/>
            <person name="Fisk D.G."/>
            <person name="Binkley G."/>
            <person name="Balakrishnan R."/>
            <person name="Costanzo M.C."/>
            <person name="Dwight S.S."/>
            <person name="Hitz B.C."/>
            <person name="Karra K."/>
            <person name="Nash R.S."/>
            <person name="Weng S."/>
            <person name="Wong E.D."/>
            <person name="Lloyd P."/>
            <person name="Skrzypek M.S."/>
            <person name="Miyasato S.R."/>
            <person name="Simison M."/>
            <person name="Cherry J.M."/>
        </authorList>
    </citation>
    <scope>GENOME REANNOTATION</scope>
    <source>
        <strain>ATCC 204508 / S288c</strain>
    </source>
</reference>
<reference key="3">
    <citation type="journal article" date="1995" name="Biochem. Biophys. Res. Commun.">
        <title>The yeast YBR235w gene encodes a homolog of the mammalian electroneutral Na(+)-(K(+))-Cl(-) cotransporter family.</title>
        <authorList>
            <person name="Andre B."/>
            <person name="Scherens B."/>
        </authorList>
    </citation>
    <scope>GENE FAMILY</scope>
</reference>
<reference key="4">
    <citation type="journal article" date="2006" name="Proc. Natl. Acad. Sci. U.S.A.">
        <title>A global topology map of the Saccharomyces cerevisiae membrane proteome.</title>
        <authorList>
            <person name="Kim H."/>
            <person name="Melen K."/>
            <person name="Oesterberg M."/>
            <person name="von Heijne G."/>
        </authorList>
    </citation>
    <scope>TOPOLOGY [LARGE SCALE ANALYSIS]</scope>
    <source>
        <strain>ATCC 208353 / W303-1A</strain>
    </source>
</reference>
<reference key="5">
    <citation type="journal article" date="2007" name="J. Proteome Res.">
        <title>Large-scale phosphorylation analysis of alpha-factor-arrested Saccharomyces cerevisiae.</title>
        <authorList>
            <person name="Li X."/>
            <person name="Gerber S.A."/>
            <person name="Rudner A.D."/>
            <person name="Beausoleil S.A."/>
            <person name="Haas W."/>
            <person name="Villen J."/>
            <person name="Elias J.E."/>
            <person name="Gygi S.P."/>
        </authorList>
    </citation>
    <scope>IDENTIFICATION BY MASS SPECTROMETRY [LARGE SCALE ANALYSIS]</scope>
    <source>
        <strain>ADR376</strain>
    </source>
</reference>
<reference key="6">
    <citation type="journal article" date="2007" name="Proc. Natl. Acad. Sci. U.S.A.">
        <title>Analysis of phosphorylation sites on proteins from Saccharomyces cerevisiae by electron transfer dissociation (ETD) mass spectrometry.</title>
        <authorList>
            <person name="Chi A."/>
            <person name="Huttenhower C."/>
            <person name="Geer L.Y."/>
            <person name="Coon J.J."/>
            <person name="Syka J.E.P."/>
            <person name="Bai D.L."/>
            <person name="Shabanowitz J."/>
            <person name="Burke D.J."/>
            <person name="Troyanskaya O.G."/>
            <person name="Hunt D.F."/>
        </authorList>
    </citation>
    <scope>PHOSPHORYLATION [LARGE SCALE ANALYSIS] AT SER-654</scope>
    <scope>IDENTIFICATION BY MASS SPECTROMETRY [LARGE SCALE ANALYSIS]</scope>
</reference>
<reference key="7">
    <citation type="journal article" date="2008" name="Mol. Cell. Proteomics">
        <title>A multidimensional chromatography technology for in-depth phosphoproteome analysis.</title>
        <authorList>
            <person name="Albuquerque C.P."/>
            <person name="Smolka M.B."/>
            <person name="Payne S.H."/>
            <person name="Bafna V."/>
            <person name="Eng J."/>
            <person name="Zhou H."/>
        </authorList>
    </citation>
    <scope>IDENTIFICATION BY MASS SPECTROMETRY [LARGE SCALE ANALYSIS]</scope>
</reference>
<reference key="8">
    <citation type="journal article" date="2009" name="Science">
        <title>Global analysis of Cdk1 substrate phosphorylation sites provides insights into evolution.</title>
        <authorList>
            <person name="Holt L.J."/>
            <person name="Tuch B.B."/>
            <person name="Villen J."/>
            <person name="Johnson A.D."/>
            <person name="Gygi S.P."/>
            <person name="Morgan D.O."/>
        </authorList>
    </citation>
    <scope>PHOSPHORYLATION [LARGE SCALE ANALYSIS] AT SER-34; SER-915 AND SER-918</scope>
    <scope>IDENTIFICATION BY MASS SPECTROMETRY [LARGE SCALE ANALYSIS]</scope>
</reference>
<reference key="9">
    <citation type="journal article" date="2013" name="Biochim. Biophys. Acta">
        <title>Vhc1, a novel transporter belonging to the family of electroneutral cation-Cl(-) cotransporters, participates in the regulation of cation content and morphology of Saccharomyces cerevisiae vacuoles.</title>
        <authorList>
            <person name="Petrezselyova S."/>
            <person name="Kinclova-Zimmermannova O."/>
            <person name="Sychrova H."/>
        </authorList>
    </citation>
    <scope>FUNCTION</scope>
    <scope>SUBCELLULAR LOCATION</scope>
    <scope>DISRUPTION PHENOTYPE</scope>
</reference>
<dbReference type="EMBL" id="Z36104">
    <property type="protein sequence ID" value="CAA85198.1"/>
    <property type="molecule type" value="Genomic_DNA"/>
</dbReference>
<dbReference type="EMBL" id="BK006936">
    <property type="protein sequence ID" value="DAA07351.1"/>
    <property type="molecule type" value="Genomic_DNA"/>
</dbReference>
<dbReference type="PIR" id="S46111">
    <property type="entry name" value="S46111"/>
</dbReference>
<dbReference type="RefSeq" id="NP_009794.3">
    <property type="nucleotide sequence ID" value="NM_001178583.3"/>
</dbReference>
<dbReference type="SMR" id="P38329"/>
<dbReference type="BioGRID" id="32930">
    <property type="interactions" value="82"/>
</dbReference>
<dbReference type="DIP" id="DIP-2969N"/>
<dbReference type="FunCoup" id="P38329">
    <property type="interactions" value="224"/>
</dbReference>
<dbReference type="IntAct" id="P38329">
    <property type="interactions" value="1"/>
</dbReference>
<dbReference type="MINT" id="P38329"/>
<dbReference type="STRING" id="4932.YBR235W"/>
<dbReference type="CarbonylDB" id="P38329"/>
<dbReference type="iPTMnet" id="P38329"/>
<dbReference type="PaxDb" id="4932-YBR235W"/>
<dbReference type="PeptideAtlas" id="P38329"/>
<dbReference type="EnsemblFungi" id="YBR235W_mRNA">
    <property type="protein sequence ID" value="YBR235W"/>
    <property type="gene ID" value="YBR235W"/>
</dbReference>
<dbReference type="GeneID" id="852537"/>
<dbReference type="KEGG" id="sce:YBR235W"/>
<dbReference type="AGR" id="SGD:S000000439"/>
<dbReference type="SGD" id="S000000439">
    <property type="gene designation" value="VHC1"/>
</dbReference>
<dbReference type="VEuPathDB" id="FungiDB:YBR235W"/>
<dbReference type="eggNOG" id="KOG1288">
    <property type="taxonomic scope" value="Eukaryota"/>
</dbReference>
<dbReference type="GeneTree" id="ENSGT00940000171884"/>
<dbReference type="HOGENOM" id="CLU_001883_4_0_1"/>
<dbReference type="InParanoid" id="P38329"/>
<dbReference type="OMA" id="NIKYWRP"/>
<dbReference type="OrthoDB" id="2020542at2759"/>
<dbReference type="BioCyc" id="YEAST:G3O-29166-MONOMER"/>
<dbReference type="BioGRID-ORCS" id="852537">
    <property type="hits" value="0 hits in 10 CRISPR screens"/>
</dbReference>
<dbReference type="PRO" id="PR:P38329"/>
<dbReference type="Proteomes" id="UP000002311">
    <property type="component" value="Chromosome II"/>
</dbReference>
<dbReference type="RNAct" id="P38329">
    <property type="molecule type" value="protein"/>
</dbReference>
<dbReference type="GO" id="GO:0000329">
    <property type="term" value="C:fungal-type vacuole membrane"/>
    <property type="evidence" value="ECO:0007005"/>
    <property type="project" value="SGD"/>
</dbReference>
<dbReference type="GO" id="GO:0005774">
    <property type="term" value="C:vacuolar membrane"/>
    <property type="evidence" value="ECO:0000314"/>
    <property type="project" value="SGD"/>
</dbReference>
<dbReference type="GO" id="GO:1990816">
    <property type="term" value="C:vacuole-mitochondrion membrane contact site"/>
    <property type="evidence" value="ECO:0000314"/>
    <property type="project" value="SGD"/>
</dbReference>
<dbReference type="GO" id="GO:0015379">
    <property type="term" value="F:potassium:chloride symporter activity"/>
    <property type="evidence" value="ECO:0000315"/>
    <property type="project" value="SGD"/>
</dbReference>
<dbReference type="GO" id="GO:0006816">
    <property type="term" value="P:calcium ion transport"/>
    <property type="evidence" value="ECO:0007669"/>
    <property type="project" value="UniProtKB-KW"/>
</dbReference>
<dbReference type="GO" id="GO:0006884">
    <property type="term" value="P:cell volume homeostasis"/>
    <property type="evidence" value="ECO:0000318"/>
    <property type="project" value="GO_Central"/>
</dbReference>
<dbReference type="GO" id="GO:0055064">
    <property type="term" value="P:chloride ion homeostasis"/>
    <property type="evidence" value="ECO:0000318"/>
    <property type="project" value="GO_Central"/>
</dbReference>
<dbReference type="GO" id="GO:1902476">
    <property type="term" value="P:chloride transmembrane transport"/>
    <property type="evidence" value="ECO:0000318"/>
    <property type="project" value="GO_Central"/>
</dbReference>
<dbReference type="GO" id="GO:0055075">
    <property type="term" value="P:potassium ion homeostasis"/>
    <property type="evidence" value="ECO:0000316"/>
    <property type="project" value="SGD"/>
</dbReference>
<dbReference type="GO" id="GO:0034486">
    <property type="term" value="P:vacuolar transmembrane transport"/>
    <property type="evidence" value="ECO:0000315"/>
    <property type="project" value="SGD"/>
</dbReference>
<dbReference type="FunFam" id="1.20.1740.10:FF:000013">
    <property type="entry name" value="Solute carrier family 12 member"/>
    <property type="match status" value="1"/>
</dbReference>
<dbReference type="Gene3D" id="1.20.1740.10">
    <property type="entry name" value="Amino acid/polyamine transporter I"/>
    <property type="match status" value="1"/>
</dbReference>
<dbReference type="InterPro" id="IPR004841">
    <property type="entry name" value="AA-permease/SLC12A_dom"/>
</dbReference>
<dbReference type="InterPro" id="IPR018491">
    <property type="entry name" value="SLC12_C"/>
</dbReference>
<dbReference type="InterPro" id="IPR004842">
    <property type="entry name" value="SLC12A_fam"/>
</dbReference>
<dbReference type="PANTHER" id="PTHR11827:SF72">
    <property type="entry name" value="GH08340P"/>
    <property type="match status" value="1"/>
</dbReference>
<dbReference type="PANTHER" id="PTHR11827">
    <property type="entry name" value="SOLUTE CARRIER FAMILY 12, CATION COTRANSPORTERS"/>
    <property type="match status" value="1"/>
</dbReference>
<dbReference type="Pfam" id="PF00324">
    <property type="entry name" value="AA_permease"/>
    <property type="match status" value="1"/>
</dbReference>
<dbReference type="Pfam" id="PF03522">
    <property type="entry name" value="SLC12"/>
    <property type="match status" value="1"/>
</dbReference>
<feature type="chain" id="PRO_0000202520" description="Vacuolar cation-chloride cotransporter 1">
    <location>
        <begin position="1"/>
        <end position="1120"/>
    </location>
</feature>
<feature type="topological domain" description="Cytoplasmic" evidence="7">
    <location>
        <begin position="1"/>
        <end position="62"/>
    </location>
</feature>
<feature type="transmembrane region" description="Helical; Name=1" evidence="1">
    <location>
        <begin position="63"/>
        <end position="83"/>
    </location>
</feature>
<feature type="topological domain" description="Vacuolar" evidence="7">
    <location>
        <begin position="84"/>
        <end position="85"/>
    </location>
</feature>
<feature type="transmembrane region" description="Helical; Name=2" evidence="1">
    <location>
        <begin position="86"/>
        <end position="106"/>
    </location>
</feature>
<feature type="topological domain" description="Cytoplasmic" evidence="7">
    <location>
        <begin position="107"/>
        <end position="145"/>
    </location>
</feature>
<feature type="transmembrane region" description="Helical; Name=3" evidence="1">
    <location>
        <begin position="146"/>
        <end position="166"/>
    </location>
</feature>
<feature type="topological domain" description="Vacuolar" evidence="7">
    <location>
        <begin position="167"/>
        <end position="193"/>
    </location>
</feature>
<feature type="transmembrane region" description="Helical; Name=4" evidence="1">
    <location>
        <begin position="194"/>
        <end position="214"/>
    </location>
</feature>
<feature type="topological domain" description="Cytoplasmic" evidence="7">
    <location>
        <begin position="215"/>
        <end position="221"/>
    </location>
</feature>
<feature type="transmembrane region" description="Helical; Name=5" evidence="1">
    <location>
        <begin position="222"/>
        <end position="242"/>
    </location>
</feature>
<feature type="topological domain" description="Vacuolar" evidence="7">
    <location>
        <begin position="243"/>
        <end position="283"/>
    </location>
</feature>
<feature type="transmembrane region" description="Helical; Name=6" evidence="1">
    <location>
        <begin position="284"/>
        <end position="304"/>
    </location>
</feature>
<feature type="topological domain" description="Cytoplasmic" evidence="7">
    <location>
        <begin position="305"/>
        <end position="317"/>
    </location>
</feature>
<feature type="transmembrane region" description="Helical; Name=7" evidence="1">
    <location>
        <begin position="318"/>
        <end position="338"/>
    </location>
</feature>
<feature type="topological domain" description="Vacuolar" evidence="7">
    <location>
        <begin position="339"/>
        <end position="360"/>
    </location>
</feature>
<feature type="transmembrane region" description="Helical; Name=8" evidence="1">
    <location>
        <begin position="361"/>
        <end position="381"/>
    </location>
</feature>
<feature type="topological domain" description="Cytoplasmic" evidence="7">
    <location>
        <begin position="382"/>
        <end position="393"/>
    </location>
</feature>
<feature type="transmembrane region" description="Helical; Name=9" evidence="1">
    <location>
        <begin position="394"/>
        <end position="414"/>
    </location>
</feature>
<feature type="topological domain" description="Vacuolar" evidence="7">
    <location>
        <begin position="415"/>
        <end position="430"/>
    </location>
</feature>
<feature type="transmembrane region" description="Helical; Name=10" evidence="1">
    <location>
        <begin position="431"/>
        <end position="451"/>
    </location>
</feature>
<feature type="topological domain" description="Cytoplasmic" evidence="7">
    <location>
        <begin position="452"/>
        <end position="462"/>
    </location>
</feature>
<feature type="transmembrane region" description="Helical; Name=11" evidence="1">
    <location>
        <begin position="463"/>
        <end position="482"/>
    </location>
</feature>
<feature type="topological domain" description="Vacuolar" evidence="7">
    <location>
        <begin position="483"/>
        <end position="487"/>
    </location>
</feature>
<feature type="transmembrane region" description="Helical; Name=12" evidence="1">
    <location>
        <begin position="488"/>
        <end position="506"/>
    </location>
</feature>
<feature type="topological domain" description="Cytoplasmic" evidence="3">
    <location>
        <begin position="507"/>
        <end position="1120"/>
    </location>
</feature>
<feature type="region of interest" description="Disordered" evidence="2">
    <location>
        <begin position="1"/>
        <end position="21"/>
    </location>
</feature>
<feature type="modified residue" description="Phosphoserine" evidence="11">
    <location>
        <position position="34"/>
    </location>
</feature>
<feature type="modified residue" description="Phosphoserine" evidence="10">
    <location>
        <position position="654"/>
    </location>
</feature>
<feature type="modified residue" description="Phosphoserine" evidence="11">
    <location>
        <position position="915"/>
    </location>
</feature>
<feature type="modified residue" description="Phosphoserine" evidence="11">
    <location>
        <position position="918"/>
    </location>
</feature>
<comment type="function">
    <text evidence="8">Catalyzes the coordinated symport of chloride with potassium ions across the vacuolar membrane. Involved in vacuolar osmoregulation.</text>
</comment>
<comment type="subcellular location">
    <subcellularLocation>
        <location evidence="4">Vacuole membrane</location>
        <topology evidence="1">Multi-pass membrane protein</topology>
    </subcellularLocation>
</comment>
<comment type="disruption phenotype">
    <text evidence="4">Affects vacuolar morphology and decreases survival upon hyperosmotic stress.</text>
</comment>
<comment type="similarity">
    <text evidence="6">Belongs to the SLC12A transporter family.</text>
</comment>